<accession>Q5XDW5</accession>
<gene>
    <name evidence="1" type="primary">rpsG</name>
    <name type="ordered locus">M6_Spy0263</name>
</gene>
<evidence type="ECO:0000255" key="1">
    <source>
        <dbReference type="HAMAP-Rule" id="MF_00480"/>
    </source>
</evidence>
<evidence type="ECO:0000305" key="2"/>
<protein>
    <recommendedName>
        <fullName evidence="1">Small ribosomal subunit protein uS7</fullName>
    </recommendedName>
    <alternativeName>
        <fullName evidence="2">30S ribosomal protein S7</fullName>
    </alternativeName>
</protein>
<keyword id="KW-0687">Ribonucleoprotein</keyword>
<keyword id="KW-0689">Ribosomal protein</keyword>
<keyword id="KW-0694">RNA-binding</keyword>
<keyword id="KW-0699">rRNA-binding</keyword>
<keyword id="KW-0820">tRNA-binding</keyword>
<comment type="function">
    <text evidence="1">One of the primary rRNA binding proteins, it binds directly to 16S rRNA where it nucleates assembly of the head domain of the 30S subunit. Is located at the subunit interface close to the decoding center, probably blocks exit of the E-site tRNA.</text>
</comment>
<comment type="subunit">
    <text evidence="1">Part of the 30S ribosomal subunit. Contacts proteins S9 and S11.</text>
</comment>
<comment type="similarity">
    <text evidence="1">Belongs to the universal ribosomal protein uS7 family.</text>
</comment>
<feature type="chain" id="PRO_0000124359" description="Small ribosomal subunit protein uS7">
    <location>
        <begin position="1"/>
        <end position="156"/>
    </location>
</feature>
<reference key="1">
    <citation type="journal article" date="2004" name="J. Infect. Dis.">
        <title>Progress toward characterization of the group A Streptococcus metagenome: complete genome sequence of a macrolide-resistant serotype M6 strain.</title>
        <authorList>
            <person name="Banks D.J."/>
            <person name="Porcella S.F."/>
            <person name="Barbian K.D."/>
            <person name="Beres S.B."/>
            <person name="Philips L.E."/>
            <person name="Voyich J.M."/>
            <person name="DeLeo F.R."/>
            <person name="Martin J.M."/>
            <person name="Somerville G.A."/>
            <person name="Musser J.M."/>
        </authorList>
    </citation>
    <scope>NUCLEOTIDE SEQUENCE [LARGE SCALE GENOMIC DNA]</scope>
    <source>
        <strain>ATCC BAA-946 / MGAS10394</strain>
    </source>
</reference>
<sequence length="156" mass="17652">MSRKNQAPKREVLPDPLYNSKIVTRLINRVMLDGKRGTAATIVYDAFSAIKEATGNDALEVFETAMDNIMPVLEVRARRVGGSNYQVPVEVRPERRTTLGLRWLVNASRARGEHTMKDRLAKEIMDAANNTGASVKKREDTHKMAEANRAFAHFRW</sequence>
<dbReference type="EMBL" id="CP000003">
    <property type="protein sequence ID" value="AAT86398.1"/>
    <property type="molecule type" value="Genomic_DNA"/>
</dbReference>
<dbReference type="RefSeq" id="WP_002986047.1">
    <property type="nucleotide sequence ID" value="NC_006086.1"/>
</dbReference>
<dbReference type="SMR" id="Q5XDW5"/>
<dbReference type="GeneID" id="69900198"/>
<dbReference type="KEGG" id="spa:M6_Spy0263"/>
<dbReference type="HOGENOM" id="CLU_072226_1_1_9"/>
<dbReference type="Proteomes" id="UP000001167">
    <property type="component" value="Chromosome"/>
</dbReference>
<dbReference type="GO" id="GO:0015935">
    <property type="term" value="C:small ribosomal subunit"/>
    <property type="evidence" value="ECO:0007669"/>
    <property type="project" value="InterPro"/>
</dbReference>
<dbReference type="GO" id="GO:0019843">
    <property type="term" value="F:rRNA binding"/>
    <property type="evidence" value="ECO:0007669"/>
    <property type="project" value="UniProtKB-UniRule"/>
</dbReference>
<dbReference type="GO" id="GO:0003735">
    <property type="term" value="F:structural constituent of ribosome"/>
    <property type="evidence" value="ECO:0007669"/>
    <property type="project" value="InterPro"/>
</dbReference>
<dbReference type="GO" id="GO:0000049">
    <property type="term" value="F:tRNA binding"/>
    <property type="evidence" value="ECO:0007669"/>
    <property type="project" value="UniProtKB-UniRule"/>
</dbReference>
<dbReference type="GO" id="GO:0006412">
    <property type="term" value="P:translation"/>
    <property type="evidence" value="ECO:0007669"/>
    <property type="project" value="UniProtKB-UniRule"/>
</dbReference>
<dbReference type="CDD" id="cd14869">
    <property type="entry name" value="uS7_Bacteria"/>
    <property type="match status" value="1"/>
</dbReference>
<dbReference type="FunFam" id="1.10.455.10:FF:000001">
    <property type="entry name" value="30S ribosomal protein S7"/>
    <property type="match status" value="1"/>
</dbReference>
<dbReference type="Gene3D" id="1.10.455.10">
    <property type="entry name" value="Ribosomal protein S7 domain"/>
    <property type="match status" value="1"/>
</dbReference>
<dbReference type="HAMAP" id="MF_00480_B">
    <property type="entry name" value="Ribosomal_uS7_B"/>
    <property type="match status" value="1"/>
</dbReference>
<dbReference type="InterPro" id="IPR000235">
    <property type="entry name" value="Ribosomal_uS7"/>
</dbReference>
<dbReference type="InterPro" id="IPR005717">
    <property type="entry name" value="Ribosomal_uS7_bac/org-type"/>
</dbReference>
<dbReference type="InterPro" id="IPR020606">
    <property type="entry name" value="Ribosomal_uS7_CS"/>
</dbReference>
<dbReference type="InterPro" id="IPR023798">
    <property type="entry name" value="Ribosomal_uS7_dom"/>
</dbReference>
<dbReference type="InterPro" id="IPR036823">
    <property type="entry name" value="Ribosomal_uS7_dom_sf"/>
</dbReference>
<dbReference type="NCBIfam" id="TIGR01029">
    <property type="entry name" value="rpsG_bact"/>
    <property type="match status" value="1"/>
</dbReference>
<dbReference type="PANTHER" id="PTHR11205">
    <property type="entry name" value="RIBOSOMAL PROTEIN S7"/>
    <property type="match status" value="1"/>
</dbReference>
<dbReference type="Pfam" id="PF00177">
    <property type="entry name" value="Ribosomal_S7"/>
    <property type="match status" value="1"/>
</dbReference>
<dbReference type="PIRSF" id="PIRSF002122">
    <property type="entry name" value="RPS7p_RPS7a_RPS5e_RPS7o"/>
    <property type="match status" value="1"/>
</dbReference>
<dbReference type="SUPFAM" id="SSF47973">
    <property type="entry name" value="Ribosomal protein S7"/>
    <property type="match status" value="1"/>
</dbReference>
<dbReference type="PROSITE" id="PS00052">
    <property type="entry name" value="RIBOSOMAL_S7"/>
    <property type="match status" value="1"/>
</dbReference>
<name>RS7_STRP6</name>
<proteinExistence type="inferred from homology"/>
<organism>
    <name type="scientific">Streptococcus pyogenes serotype M6 (strain ATCC BAA-946 / MGAS10394)</name>
    <dbReference type="NCBI Taxonomy" id="286636"/>
    <lineage>
        <taxon>Bacteria</taxon>
        <taxon>Bacillati</taxon>
        <taxon>Bacillota</taxon>
        <taxon>Bacilli</taxon>
        <taxon>Lactobacillales</taxon>
        <taxon>Streptococcaceae</taxon>
        <taxon>Streptococcus</taxon>
    </lineage>
</organism>